<gene>
    <name evidence="1" type="primary">rpsT</name>
    <name type="ordered locus">Glov_2108</name>
</gene>
<proteinExistence type="inferred from homology"/>
<dbReference type="EMBL" id="CP001089">
    <property type="protein sequence ID" value="ACD95824.1"/>
    <property type="molecule type" value="Genomic_DNA"/>
</dbReference>
<dbReference type="RefSeq" id="WP_012470163.1">
    <property type="nucleotide sequence ID" value="NC_010814.1"/>
</dbReference>
<dbReference type="SMR" id="B3E3K5"/>
<dbReference type="STRING" id="398767.Glov_2108"/>
<dbReference type="KEGG" id="glo:Glov_2108"/>
<dbReference type="eggNOG" id="COG0268">
    <property type="taxonomic scope" value="Bacteria"/>
</dbReference>
<dbReference type="HOGENOM" id="CLU_160655_3_1_7"/>
<dbReference type="OrthoDB" id="9807974at2"/>
<dbReference type="Proteomes" id="UP000002420">
    <property type="component" value="Chromosome"/>
</dbReference>
<dbReference type="GO" id="GO:0005829">
    <property type="term" value="C:cytosol"/>
    <property type="evidence" value="ECO:0007669"/>
    <property type="project" value="TreeGrafter"/>
</dbReference>
<dbReference type="GO" id="GO:0015935">
    <property type="term" value="C:small ribosomal subunit"/>
    <property type="evidence" value="ECO:0007669"/>
    <property type="project" value="TreeGrafter"/>
</dbReference>
<dbReference type="GO" id="GO:0070181">
    <property type="term" value="F:small ribosomal subunit rRNA binding"/>
    <property type="evidence" value="ECO:0007669"/>
    <property type="project" value="TreeGrafter"/>
</dbReference>
<dbReference type="GO" id="GO:0003735">
    <property type="term" value="F:structural constituent of ribosome"/>
    <property type="evidence" value="ECO:0007669"/>
    <property type="project" value="InterPro"/>
</dbReference>
<dbReference type="GO" id="GO:0006412">
    <property type="term" value="P:translation"/>
    <property type="evidence" value="ECO:0007669"/>
    <property type="project" value="UniProtKB-UniRule"/>
</dbReference>
<dbReference type="FunFam" id="1.20.58.110:FF:000001">
    <property type="entry name" value="30S ribosomal protein S20"/>
    <property type="match status" value="1"/>
</dbReference>
<dbReference type="Gene3D" id="1.20.58.110">
    <property type="entry name" value="Ribosomal protein S20"/>
    <property type="match status" value="1"/>
</dbReference>
<dbReference type="HAMAP" id="MF_00500">
    <property type="entry name" value="Ribosomal_bS20"/>
    <property type="match status" value="1"/>
</dbReference>
<dbReference type="InterPro" id="IPR002583">
    <property type="entry name" value="Ribosomal_bS20"/>
</dbReference>
<dbReference type="InterPro" id="IPR036510">
    <property type="entry name" value="Ribosomal_bS20_sf"/>
</dbReference>
<dbReference type="NCBIfam" id="TIGR00029">
    <property type="entry name" value="S20"/>
    <property type="match status" value="1"/>
</dbReference>
<dbReference type="PANTHER" id="PTHR33398">
    <property type="entry name" value="30S RIBOSOMAL PROTEIN S20"/>
    <property type="match status" value="1"/>
</dbReference>
<dbReference type="PANTHER" id="PTHR33398:SF1">
    <property type="entry name" value="SMALL RIBOSOMAL SUBUNIT PROTEIN BS20C"/>
    <property type="match status" value="1"/>
</dbReference>
<dbReference type="Pfam" id="PF01649">
    <property type="entry name" value="Ribosomal_S20p"/>
    <property type="match status" value="1"/>
</dbReference>
<dbReference type="SUPFAM" id="SSF46992">
    <property type="entry name" value="Ribosomal protein S20"/>
    <property type="match status" value="1"/>
</dbReference>
<organism>
    <name type="scientific">Trichlorobacter lovleyi (strain ATCC BAA-1151 / DSM 17278 / SZ)</name>
    <name type="common">Geobacter lovleyi</name>
    <dbReference type="NCBI Taxonomy" id="398767"/>
    <lineage>
        <taxon>Bacteria</taxon>
        <taxon>Pseudomonadati</taxon>
        <taxon>Thermodesulfobacteriota</taxon>
        <taxon>Desulfuromonadia</taxon>
        <taxon>Geobacterales</taxon>
        <taxon>Geobacteraceae</taxon>
        <taxon>Trichlorobacter</taxon>
    </lineage>
</organism>
<reference key="1">
    <citation type="submission" date="2008-05" db="EMBL/GenBank/DDBJ databases">
        <title>Complete sequence of chromosome of Geobacter lovleyi SZ.</title>
        <authorList>
            <consortium name="US DOE Joint Genome Institute"/>
            <person name="Lucas S."/>
            <person name="Copeland A."/>
            <person name="Lapidus A."/>
            <person name="Glavina del Rio T."/>
            <person name="Dalin E."/>
            <person name="Tice H."/>
            <person name="Bruce D."/>
            <person name="Goodwin L."/>
            <person name="Pitluck S."/>
            <person name="Chertkov O."/>
            <person name="Meincke L."/>
            <person name="Brettin T."/>
            <person name="Detter J.C."/>
            <person name="Han C."/>
            <person name="Tapia R."/>
            <person name="Kuske C.R."/>
            <person name="Schmutz J."/>
            <person name="Larimer F."/>
            <person name="Land M."/>
            <person name="Hauser L."/>
            <person name="Kyrpides N."/>
            <person name="Mikhailova N."/>
            <person name="Sung Y."/>
            <person name="Fletcher K.E."/>
            <person name="Ritalahti K.M."/>
            <person name="Loeffler F.E."/>
            <person name="Richardson P."/>
        </authorList>
    </citation>
    <scope>NUCLEOTIDE SEQUENCE [LARGE SCALE GENOMIC DNA]</scope>
    <source>
        <strain>ATCC BAA-1151 / DSM 17278 / SZ</strain>
    </source>
</reference>
<feature type="chain" id="PRO_1000126452" description="Small ribosomal subunit protein bS20">
    <location>
        <begin position="1"/>
        <end position="87"/>
    </location>
</feature>
<feature type="region of interest" description="Disordered" evidence="2">
    <location>
        <begin position="1"/>
        <end position="26"/>
    </location>
</feature>
<feature type="compositionally biased region" description="Basic residues" evidence="2">
    <location>
        <begin position="1"/>
        <end position="11"/>
    </location>
</feature>
<keyword id="KW-1185">Reference proteome</keyword>
<keyword id="KW-0687">Ribonucleoprotein</keyword>
<keyword id="KW-0689">Ribosomal protein</keyword>
<keyword id="KW-0694">RNA-binding</keyword>
<keyword id="KW-0699">rRNA-binding</keyword>
<sequence length="87" mass="9709">MAHHKSAIKRIKQNEKRNARNRHQKSTLKTYIKRVREAVESKDKEAAVAALQVAIPVIDKTATKGVIHKANASRSVSRLTKLVNTLG</sequence>
<accession>B3E3K5</accession>
<protein>
    <recommendedName>
        <fullName evidence="1">Small ribosomal subunit protein bS20</fullName>
    </recommendedName>
    <alternativeName>
        <fullName evidence="3">30S ribosomal protein S20</fullName>
    </alternativeName>
</protein>
<evidence type="ECO:0000255" key="1">
    <source>
        <dbReference type="HAMAP-Rule" id="MF_00500"/>
    </source>
</evidence>
<evidence type="ECO:0000256" key="2">
    <source>
        <dbReference type="SAM" id="MobiDB-lite"/>
    </source>
</evidence>
<evidence type="ECO:0000305" key="3"/>
<comment type="function">
    <text evidence="1">Binds directly to 16S ribosomal RNA.</text>
</comment>
<comment type="similarity">
    <text evidence="1">Belongs to the bacterial ribosomal protein bS20 family.</text>
</comment>
<name>RS20_TRIL1</name>